<keyword id="KW-0027">Amidation</keyword>
<keyword id="KW-1015">Disulfide bond</keyword>
<keyword id="KW-0528">Neurotoxin</keyword>
<keyword id="KW-0964">Secreted</keyword>
<keyword id="KW-0732">Signal</keyword>
<keyword id="KW-0800">Toxin</keyword>
<dbReference type="EMBL" id="AF214974">
    <property type="protein sequence ID" value="AAG60402.1"/>
    <property type="molecule type" value="mRNA"/>
</dbReference>
<dbReference type="ConoServer" id="661">
    <property type="toxin name" value="Ts5.1 precursor"/>
</dbReference>
<dbReference type="GO" id="GO:0005576">
    <property type="term" value="C:extracellular region"/>
    <property type="evidence" value="ECO:0007669"/>
    <property type="project" value="UniProtKB-SubCell"/>
</dbReference>
<dbReference type="GO" id="GO:0090729">
    <property type="term" value="F:toxin activity"/>
    <property type="evidence" value="ECO:0007669"/>
    <property type="project" value="UniProtKB-KW"/>
</dbReference>
<dbReference type="InterPro" id="IPR031565">
    <property type="entry name" value="T-conotoxin"/>
</dbReference>
<dbReference type="Pfam" id="PF16981">
    <property type="entry name" value="Chi-conotoxin"/>
    <property type="match status" value="1"/>
</dbReference>
<feature type="signal peptide" evidence="2">
    <location>
        <begin position="1"/>
        <end position="20"/>
    </location>
</feature>
<feature type="propeptide" id="PRO_0000404940" evidence="1">
    <location>
        <begin position="21"/>
        <end position="48"/>
    </location>
</feature>
<feature type="peptide" id="PRO_0000404941" description="Conotoxin TsMRCL-04">
    <location>
        <begin position="49"/>
        <end position="63"/>
    </location>
</feature>
<feature type="modified residue" description="Glutamic acid 1-amide" evidence="1">
    <location>
        <position position="63"/>
    </location>
</feature>
<organism>
    <name type="scientific">Conus tessulatus</name>
    <name type="common">Tessellate cone</name>
    <dbReference type="NCBI Taxonomy" id="101317"/>
    <lineage>
        <taxon>Eukaryota</taxon>
        <taxon>Metazoa</taxon>
        <taxon>Spiralia</taxon>
        <taxon>Lophotrochozoa</taxon>
        <taxon>Mollusca</taxon>
        <taxon>Gastropoda</taxon>
        <taxon>Caenogastropoda</taxon>
        <taxon>Neogastropoda</taxon>
        <taxon>Conoidea</taxon>
        <taxon>Conidae</taxon>
        <taxon>Conus</taxon>
        <taxon>Tesselliconus</taxon>
    </lineage>
</organism>
<protein>
    <recommendedName>
        <fullName evidence="5">Conotoxin TsMRCL-04</fullName>
    </recommendedName>
</protein>
<evidence type="ECO:0000250" key="1"/>
<evidence type="ECO:0000255" key="2"/>
<evidence type="ECO:0000305" key="3"/>
<evidence type="ECO:0000305" key="4">
    <source>
    </source>
</evidence>
<evidence type="ECO:0000312" key="5">
    <source>
        <dbReference type="EMBL" id="AAG60402.1"/>
    </source>
</evidence>
<reference key="1">
    <citation type="journal article" date="2001" name="Mol. Biol. Evol.">
        <title>Mechanisms for evolving hypervariability: the case of conopeptides.</title>
        <authorList>
            <person name="Conticello S.G."/>
            <person name="Gilad Y."/>
            <person name="Avidan N."/>
            <person name="Ben-Asher E."/>
            <person name="Levy Z."/>
            <person name="Fainzilber M."/>
        </authorList>
    </citation>
    <scope>NUCLEOTIDE SEQUENCE [MRNA]</scope>
    <source>
        <tissue>Venom duct</tissue>
    </source>
</reference>
<accession>Q9BPF5</accession>
<sequence>MRCLPVFIILLLLIPSAASAAQPETKDDAALASFYDNAKRTLQRHWAKSLCCPEDAWCCSHDEGK</sequence>
<comment type="subcellular location">
    <subcellularLocation>
        <location evidence="4">Secreted</location>
    </subcellularLocation>
</comment>
<comment type="tissue specificity">
    <text evidence="4">Expressed by the venom duct.</text>
</comment>
<comment type="domain">
    <text evidence="3">The cysteine framework is V (CC-CC).</text>
</comment>
<comment type="PTM">
    <text evidence="3">Contains 2 disulfide bonds that can be either 'C1-C3, C2-C4' or 'C1-C4, C2-C3', since these disulfide connectivities have been observed for conotoxins with cysteine framework V (for examples, see AC P0DQQ7 and AC P81755).</text>
</comment>
<comment type="similarity">
    <text evidence="3">Belongs to the conotoxin T superfamily.</text>
</comment>
<name>CT51_CONTS</name>
<proteinExistence type="inferred from homology"/>